<gene>
    <name evidence="1" type="primary">hisA</name>
    <name type="ordered locus">PSPA7_5876</name>
</gene>
<evidence type="ECO:0000255" key="1">
    <source>
        <dbReference type="HAMAP-Rule" id="MF_01014"/>
    </source>
</evidence>
<comment type="catalytic activity">
    <reaction evidence="1">
        <text>1-(5-phospho-beta-D-ribosyl)-5-[(5-phospho-beta-D-ribosylamino)methylideneamino]imidazole-4-carboxamide = 5-[(5-phospho-1-deoxy-D-ribulos-1-ylimino)methylamino]-1-(5-phospho-beta-D-ribosyl)imidazole-4-carboxamide</text>
        <dbReference type="Rhea" id="RHEA:15469"/>
        <dbReference type="ChEBI" id="CHEBI:58435"/>
        <dbReference type="ChEBI" id="CHEBI:58525"/>
        <dbReference type="EC" id="5.3.1.16"/>
    </reaction>
</comment>
<comment type="pathway">
    <text evidence="1">Amino-acid biosynthesis; L-histidine biosynthesis; L-histidine from 5-phospho-alpha-D-ribose 1-diphosphate: step 4/9.</text>
</comment>
<comment type="subcellular location">
    <subcellularLocation>
        <location evidence="1">Cytoplasm</location>
    </subcellularLocation>
</comment>
<comment type="similarity">
    <text evidence="1">Belongs to the HisA/HisF family.</text>
</comment>
<accession>A6VDR0</accession>
<keyword id="KW-0028">Amino-acid biosynthesis</keyword>
<keyword id="KW-0963">Cytoplasm</keyword>
<keyword id="KW-0368">Histidine biosynthesis</keyword>
<keyword id="KW-0413">Isomerase</keyword>
<feature type="chain" id="PRO_1000063225" description="1-(5-phosphoribosyl)-5-[(5-phosphoribosylamino)methylideneamino] imidazole-4-carboxamide isomerase">
    <location>
        <begin position="1"/>
        <end position="245"/>
    </location>
</feature>
<feature type="active site" description="Proton acceptor" evidence="1">
    <location>
        <position position="8"/>
    </location>
</feature>
<feature type="active site" description="Proton donor" evidence="1">
    <location>
        <position position="130"/>
    </location>
</feature>
<protein>
    <recommendedName>
        <fullName evidence="1">1-(5-phosphoribosyl)-5-[(5-phosphoribosylamino)methylideneamino] imidazole-4-carboxamide isomerase</fullName>
        <ecNumber evidence="1">5.3.1.16</ecNumber>
    </recommendedName>
    <alternativeName>
        <fullName evidence="1">Phosphoribosylformimino-5-aminoimidazole carboxamide ribotide isomerase</fullName>
    </alternativeName>
</protein>
<organism>
    <name type="scientific">Pseudomonas paraeruginosa (strain DSM 24068 / PA7)</name>
    <name type="common">Pseudomonas aeruginosa (strain PA7)</name>
    <dbReference type="NCBI Taxonomy" id="381754"/>
    <lineage>
        <taxon>Bacteria</taxon>
        <taxon>Pseudomonadati</taxon>
        <taxon>Pseudomonadota</taxon>
        <taxon>Gammaproteobacteria</taxon>
        <taxon>Pseudomonadales</taxon>
        <taxon>Pseudomonadaceae</taxon>
        <taxon>Pseudomonas</taxon>
        <taxon>Pseudomonas paraeruginosa</taxon>
    </lineage>
</organism>
<name>HIS4_PSEP7</name>
<sequence>MLIIPAIDLKDGACVRLRQGLMEDATVFSDDPVAMAAKWVDGGCRRLHLVDLNGAFEGKPVNGEVVTAIARRYPDLPIQIGGGIRSLETIEHYVRAGVSYVIIGTKAVKQPEFVGEACRAFPGKVIVGLDAKDGFVATDGWAEVSEVQVIDLARRFEADGVSAIVYTDISKDGMMQGCNVEATAALANATRIPVIASGGIHNLGDIQKLLDARTPGIIGAITGRAIYEGTLDVAEAQALCDNFKA</sequence>
<proteinExistence type="inferred from homology"/>
<dbReference type="EC" id="5.3.1.16" evidence="1"/>
<dbReference type="EMBL" id="CP000744">
    <property type="protein sequence ID" value="ABR86684.1"/>
    <property type="molecule type" value="Genomic_DNA"/>
</dbReference>
<dbReference type="RefSeq" id="WP_003106336.1">
    <property type="nucleotide sequence ID" value="NC_009656.1"/>
</dbReference>
<dbReference type="SMR" id="A6VDR0"/>
<dbReference type="KEGG" id="pap:PSPA7_5876"/>
<dbReference type="HOGENOM" id="CLU_048577_1_1_6"/>
<dbReference type="UniPathway" id="UPA00031">
    <property type="reaction ID" value="UER00009"/>
</dbReference>
<dbReference type="Proteomes" id="UP000001582">
    <property type="component" value="Chromosome"/>
</dbReference>
<dbReference type="GO" id="GO:0005737">
    <property type="term" value="C:cytoplasm"/>
    <property type="evidence" value="ECO:0007669"/>
    <property type="project" value="UniProtKB-SubCell"/>
</dbReference>
<dbReference type="GO" id="GO:0003949">
    <property type="term" value="F:1-(5-phosphoribosyl)-5-[(5-phosphoribosylamino)methylideneamino]imidazole-4-carboxamide isomerase activity"/>
    <property type="evidence" value="ECO:0007669"/>
    <property type="project" value="UniProtKB-UniRule"/>
</dbReference>
<dbReference type="GO" id="GO:0000105">
    <property type="term" value="P:L-histidine biosynthetic process"/>
    <property type="evidence" value="ECO:0007669"/>
    <property type="project" value="UniProtKB-UniRule"/>
</dbReference>
<dbReference type="GO" id="GO:0000162">
    <property type="term" value="P:L-tryptophan biosynthetic process"/>
    <property type="evidence" value="ECO:0007669"/>
    <property type="project" value="TreeGrafter"/>
</dbReference>
<dbReference type="CDD" id="cd04732">
    <property type="entry name" value="HisA"/>
    <property type="match status" value="1"/>
</dbReference>
<dbReference type="FunFam" id="3.20.20.70:FF:000009">
    <property type="entry name" value="1-(5-phosphoribosyl)-5-[(5-phosphoribosylamino)methylideneamino] imidazole-4-carboxamide isomerase"/>
    <property type="match status" value="1"/>
</dbReference>
<dbReference type="Gene3D" id="3.20.20.70">
    <property type="entry name" value="Aldolase class I"/>
    <property type="match status" value="1"/>
</dbReference>
<dbReference type="HAMAP" id="MF_01014">
    <property type="entry name" value="HisA"/>
    <property type="match status" value="1"/>
</dbReference>
<dbReference type="InterPro" id="IPR013785">
    <property type="entry name" value="Aldolase_TIM"/>
</dbReference>
<dbReference type="InterPro" id="IPR006062">
    <property type="entry name" value="His_biosynth"/>
</dbReference>
<dbReference type="InterPro" id="IPR006063">
    <property type="entry name" value="HisA_bact_arch"/>
</dbReference>
<dbReference type="InterPro" id="IPR044524">
    <property type="entry name" value="Isoase_HisA-like"/>
</dbReference>
<dbReference type="InterPro" id="IPR023016">
    <property type="entry name" value="Isoase_HisA-like_bact"/>
</dbReference>
<dbReference type="InterPro" id="IPR011060">
    <property type="entry name" value="RibuloseP-bd_barrel"/>
</dbReference>
<dbReference type="NCBIfam" id="TIGR00007">
    <property type="entry name" value="1-(5-phosphoribosyl)-5-[(5-phosphoribosylamino)methylideneamino]imidazole-4-carboxamide isomerase"/>
    <property type="match status" value="1"/>
</dbReference>
<dbReference type="PANTHER" id="PTHR43090">
    <property type="entry name" value="1-(5-PHOSPHORIBOSYL)-5-[(5-PHOSPHORIBOSYLAMINO)METHYLIDENEAMINO] IMIDAZOLE-4-CARBOXAMIDE ISOMERASE"/>
    <property type="match status" value="1"/>
</dbReference>
<dbReference type="PANTHER" id="PTHR43090:SF2">
    <property type="entry name" value="1-(5-PHOSPHORIBOSYL)-5-[(5-PHOSPHORIBOSYLAMINO)METHYLIDENEAMINO] IMIDAZOLE-4-CARBOXAMIDE ISOMERASE"/>
    <property type="match status" value="1"/>
</dbReference>
<dbReference type="Pfam" id="PF00977">
    <property type="entry name" value="His_biosynth"/>
    <property type="match status" value="1"/>
</dbReference>
<dbReference type="SUPFAM" id="SSF51366">
    <property type="entry name" value="Ribulose-phoshate binding barrel"/>
    <property type="match status" value="1"/>
</dbReference>
<reference key="1">
    <citation type="submission" date="2007-06" db="EMBL/GenBank/DDBJ databases">
        <authorList>
            <person name="Dodson R.J."/>
            <person name="Harkins D."/>
            <person name="Paulsen I.T."/>
        </authorList>
    </citation>
    <scope>NUCLEOTIDE SEQUENCE [LARGE SCALE GENOMIC DNA]</scope>
    <source>
        <strain>DSM 24068 / PA7</strain>
    </source>
</reference>